<reference key="1">
    <citation type="journal article" date="2009" name="BMC Genomics">
        <title>Analysis of the Rickettsia africae genome reveals that virulence acquisition in Rickettsia species may be explained by genome reduction.</title>
        <authorList>
            <person name="Fournier P.-E."/>
            <person name="El Karkouri K."/>
            <person name="Leroy Q."/>
            <person name="Robert C."/>
            <person name="Giumelli B."/>
            <person name="Renesto P."/>
            <person name="Socolovschi C."/>
            <person name="Parola P."/>
            <person name="Audic S."/>
            <person name="Raoult D."/>
        </authorList>
    </citation>
    <scope>NUCLEOTIDE SEQUENCE [LARGE SCALE GENOMIC DNA]</scope>
    <source>
        <strain>ESF-5</strain>
    </source>
</reference>
<sequence>MLNVNFVNEESSTNQGLVVFIDEQLKLDSNLIGLDQQHHGLISKTIQNKLQFTGKYGQIKVIPSVIKSGEVRYLIIAGLGNEEKLTEAKIEELGGKILQHATGCKISTIGLKLTNRISRFTSQTFASLVASGAFLASYRFDKYRTTLKEAEKFAVESIEIFTDNSTETAKLFEIKKLIAEAVFFTRDISNEPSNIKTPQVYAERIVDRLEPLGVDVDVIGEREMKNLGMGALLGVGQGSQNESKLVVMEYKGGSKDAPTIALVGKGVIFDTGGISLKPSSDMHLMRYDMGGSAAVVGTIIAVAGQKLPINIVGVVGLVENMPSGNAQRPGDVVTTMSGQTAEVLNTDAEGRLVLADAVWYAQEKFKPKCVIDVATLTGAITIALGNTYAGCFSNNDELADKLIKVGEEVNEKLWRMPLHDEYDAMINSDIADMANIGNVPRAAGSCIAAHFIKRFIKDGVDWAHLDIAGVANSNKASALGPKGAVGYGVRLLEKFIKEYT</sequence>
<keyword id="KW-0031">Aminopeptidase</keyword>
<keyword id="KW-0963">Cytoplasm</keyword>
<keyword id="KW-0378">Hydrolase</keyword>
<keyword id="KW-0464">Manganese</keyword>
<keyword id="KW-0479">Metal-binding</keyword>
<keyword id="KW-0645">Protease</keyword>
<accession>C3PMI0</accession>
<comment type="function">
    <text evidence="1">Presumably involved in the processing and regular turnover of intracellular proteins. Catalyzes the removal of unsubstituted N-terminal amino acids from various peptides.</text>
</comment>
<comment type="catalytic activity">
    <reaction evidence="1">
        <text>Release of an N-terminal amino acid, Xaa-|-Yaa-, in which Xaa is preferably Leu, but may be other amino acids including Pro although not Arg or Lys, and Yaa may be Pro. Amino acid amides and methyl esters are also readily hydrolyzed, but rates on arylamides are exceedingly low.</text>
        <dbReference type="EC" id="3.4.11.1"/>
    </reaction>
</comment>
<comment type="catalytic activity">
    <reaction evidence="1">
        <text>Release of an N-terminal amino acid, preferentially leucine, but not glutamic or aspartic acids.</text>
        <dbReference type="EC" id="3.4.11.10"/>
    </reaction>
</comment>
<comment type="cofactor">
    <cofactor evidence="1">
        <name>Mn(2+)</name>
        <dbReference type="ChEBI" id="CHEBI:29035"/>
    </cofactor>
    <text evidence="1">Binds 2 manganese ions per subunit.</text>
</comment>
<comment type="subcellular location">
    <subcellularLocation>
        <location evidence="1">Cytoplasm</location>
    </subcellularLocation>
</comment>
<comment type="similarity">
    <text evidence="1">Belongs to the peptidase M17 family.</text>
</comment>
<dbReference type="EC" id="3.4.11.1" evidence="1"/>
<dbReference type="EC" id="3.4.11.10" evidence="1"/>
<dbReference type="EMBL" id="CP001612">
    <property type="protein sequence ID" value="ACP53140.1"/>
    <property type="molecule type" value="Genomic_DNA"/>
</dbReference>
<dbReference type="RefSeq" id="WP_010976854.1">
    <property type="nucleotide sequence ID" value="NC_012633.1"/>
</dbReference>
<dbReference type="SMR" id="C3PMI0"/>
<dbReference type="MEROPS" id="M17.003"/>
<dbReference type="KEGG" id="raf:RAF_ORF0173"/>
<dbReference type="HOGENOM" id="CLU_013734_6_0_5"/>
<dbReference type="Proteomes" id="UP000002305">
    <property type="component" value="Chromosome"/>
</dbReference>
<dbReference type="GO" id="GO:0005737">
    <property type="term" value="C:cytoplasm"/>
    <property type="evidence" value="ECO:0007669"/>
    <property type="project" value="UniProtKB-SubCell"/>
</dbReference>
<dbReference type="GO" id="GO:0030145">
    <property type="term" value="F:manganese ion binding"/>
    <property type="evidence" value="ECO:0007669"/>
    <property type="project" value="UniProtKB-UniRule"/>
</dbReference>
<dbReference type="GO" id="GO:0070006">
    <property type="term" value="F:metalloaminopeptidase activity"/>
    <property type="evidence" value="ECO:0007669"/>
    <property type="project" value="InterPro"/>
</dbReference>
<dbReference type="GO" id="GO:0006508">
    <property type="term" value="P:proteolysis"/>
    <property type="evidence" value="ECO:0007669"/>
    <property type="project" value="UniProtKB-KW"/>
</dbReference>
<dbReference type="CDD" id="cd00433">
    <property type="entry name" value="Peptidase_M17"/>
    <property type="match status" value="1"/>
</dbReference>
<dbReference type="Gene3D" id="3.40.220.10">
    <property type="entry name" value="Leucine Aminopeptidase, subunit E, domain 1"/>
    <property type="match status" value="1"/>
</dbReference>
<dbReference type="Gene3D" id="3.40.630.10">
    <property type="entry name" value="Zn peptidases"/>
    <property type="match status" value="1"/>
</dbReference>
<dbReference type="HAMAP" id="MF_00181">
    <property type="entry name" value="Cytosol_peptidase_M17"/>
    <property type="match status" value="1"/>
</dbReference>
<dbReference type="InterPro" id="IPR011356">
    <property type="entry name" value="Leucine_aapep/pepB"/>
</dbReference>
<dbReference type="InterPro" id="IPR043472">
    <property type="entry name" value="Macro_dom-like"/>
</dbReference>
<dbReference type="InterPro" id="IPR000819">
    <property type="entry name" value="Peptidase_M17_C"/>
</dbReference>
<dbReference type="InterPro" id="IPR023042">
    <property type="entry name" value="Peptidase_M17_leu_NH2_pept"/>
</dbReference>
<dbReference type="InterPro" id="IPR008283">
    <property type="entry name" value="Peptidase_M17_N"/>
</dbReference>
<dbReference type="NCBIfam" id="NF002073">
    <property type="entry name" value="PRK00913.1-2"/>
    <property type="match status" value="1"/>
</dbReference>
<dbReference type="NCBIfam" id="NF002074">
    <property type="entry name" value="PRK00913.1-4"/>
    <property type="match status" value="1"/>
</dbReference>
<dbReference type="NCBIfam" id="NF002075">
    <property type="entry name" value="PRK00913.2-2"/>
    <property type="match status" value="1"/>
</dbReference>
<dbReference type="NCBIfam" id="NF002077">
    <property type="entry name" value="PRK00913.2-4"/>
    <property type="match status" value="1"/>
</dbReference>
<dbReference type="PANTHER" id="PTHR11963:SF23">
    <property type="entry name" value="CYTOSOL AMINOPEPTIDASE"/>
    <property type="match status" value="1"/>
</dbReference>
<dbReference type="PANTHER" id="PTHR11963">
    <property type="entry name" value="LEUCINE AMINOPEPTIDASE-RELATED"/>
    <property type="match status" value="1"/>
</dbReference>
<dbReference type="Pfam" id="PF00883">
    <property type="entry name" value="Peptidase_M17"/>
    <property type="match status" value="1"/>
</dbReference>
<dbReference type="Pfam" id="PF02789">
    <property type="entry name" value="Peptidase_M17_N"/>
    <property type="match status" value="1"/>
</dbReference>
<dbReference type="PRINTS" id="PR00481">
    <property type="entry name" value="LAMNOPPTDASE"/>
</dbReference>
<dbReference type="SUPFAM" id="SSF52949">
    <property type="entry name" value="Macro domain-like"/>
    <property type="match status" value="1"/>
</dbReference>
<dbReference type="SUPFAM" id="SSF53187">
    <property type="entry name" value="Zn-dependent exopeptidases"/>
    <property type="match status" value="1"/>
</dbReference>
<dbReference type="PROSITE" id="PS00631">
    <property type="entry name" value="CYTOSOL_AP"/>
    <property type="match status" value="1"/>
</dbReference>
<feature type="chain" id="PRO_1000203839" description="Probable cytosol aminopeptidase">
    <location>
        <begin position="1"/>
        <end position="500"/>
    </location>
</feature>
<feature type="active site" evidence="1">
    <location>
        <position position="277"/>
    </location>
</feature>
<feature type="active site" evidence="1">
    <location>
        <position position="351"/>
    </location>
</feature>
<feature type="binding site" evidence="1">
    <location>
        <position position="265"/>
    </location>
    <ligand>
        <name>Mn(2+)</name>
        <dbReference type="ChEBI" id="CHEBI:29035"/>
        <label>2</label>
    </ligand>
</feature>
<feature type="binding site" evidence="1">
    <location>
        <position position="270"/>
    </location>
    <ligand>
        <name>Mn(2+)</name>
        <dbReference type="ChEBI" id="CHEBI:29035"/>
        <label>1</label>
    </ligand>
</feature>
<feature type="binding site" evidence="1">
    <location>
        <position position="270"/>
    </location>
    <ligand>
        <name>Mn(2+)</name>
        <dbReference type="ChEBI" id="CHEBI:29035"/>
        <label>2</label>
    </ligand>
</feature>
<feature type="binding site" evidence="1">
    <location>
        <position position="288"/>
    </location>
    <ligand>
        <name>Mn(2+)</name>
        <dbReference type="ChEBI" id="CHEBI:29035"/>
        <label>2</label>
    </ligand>
</feature>
<feature type="binding site" evidence="1">
    <location>
        <position position="347"/>
    </location>
    <ligand>
        <name>Mn(2+)</name>
        <dbReference type="ChEBI" id="CHEBI:29035"/>
        <label>1</label>
    </ligand>
</feature>
<feature type="binding site" evidence="1">
    <location>
        <position position="349"/>
    </location>
    <ligand>
        <name>Mn(2+)</name>
        <dbReference type="ChEBI" id="CHEBI:29035"/>
        <label>1</label>
    </ligand>
</feature>
<feature type="binding site" evidence="1">
    <location>
        <position position="349"/>
    </location>
    <ligand>
        <name>Mn(2+)</name>
        <dbReference type="ChEBI" id="CHEBI:29035"/>
        <label>2</label>
    </ligand>
</feature>
<gene>
    <name evidence="1" type="primary">pepA</name>
    <name type="ordered locus">RAF_ORF0173</name>
</gene>
<name>AMPA_RICAE</name>
<organism>
    <name type="scientific">Rickettsia africae (strain ESF-5)</name>
    <dbReference type="NCBI Taxonomy" id="347255"/>
    <lineage>
        <taxon>Bacteria</taxon>
        <taxon>Pseudomonadati</taxon>
        <taxon>Pseudomonadota</taxon>
        <taxon>Alphaproteobacteria</taxon>
        <taxon>Rickettsiales</taxon>
        <taxon>Rickettsiaceae</taxon>
        <taxon>Rickettsieae</taxon>
        <taxon>Rickettsia</taxon>
        <taxon>spotted fever group</taxon>
    </lineage>
</organism>
<protein>
    <recommendedName>
        <fullName evidence="1">Probable cytosol aminopeptidase</fullName>
        <ecNumber evidence="1">3.4.11.1</ecNumber>
    </recommendedName>
    <alternativeName>
        <fullName evidence="1">Leucine aminopeptidase</fullName>
        <shortName evidence="1">LAP</shortName>
        <ecNumber evidence="1">3.4.11.10</ecNumber>
    </alternativeName>
    <alternativeName>
        <fullName evidence="1">Leucyl aminopeptidase</fullName>
    </alternativeName>
</protein>
<proteinExistence type="inferred from homology"/>
<evidence type="ECO:0000255" key="1">
    <source>
        <dbReference type="HAMAP-Rule" id="MF_00181"/>
    </source>
</evidence>